<comment type="subcellular location">
    <subcellularLocation>
        <location evidence="1">Secreted</location>
    </subcellularLocation>
</comment>
<comment type="tissue specificity">
    <text evidence="1">Expressed by the venom gland.</text>
</comment>
<comment type="mass spectrometry"/>
<feature type="peptide" id="PRO_0000398144" description="Venom peptide Ocy8" evidence="1">
    <location>
        <begin position="1"/>
        <end position="20" status="greater than"/>
    </location>
</feature>
<feature type="non-terminal residue" evidence="2">
    <location>
        <position position="20"/>
    </location>
</feature>
<proteinExistence type="evidence at protein level"/>
<name>VP08_OPICY</name>
<keyword id="KW-0903">Direct protein sequencing</keyword>
<keyword id="KW-0964">Secreted</keyword>
<reference evidence="3" key="1">
    <citation type="journal article" date="2008" name="Toxicon">
        <title>Mass spectrometry analysis, amino acid sequence and biological activity of venom components from the Brazilian scorpion Opisthacanthus cayaporum.</title>
        <authorList>
            <person name="Schwartz E.F."/>
            <person name="Camargos T.S."/>
            <person name="Zamudio F.Z."/>
            <person name="Silva L.P."/>
            <person name="Bloch C. Jr."/>
            <person name="Caixeta F."/>
            <person name="Schwartz C.A."/>
            <person name="Possani L.D."/>
        </authorList>
    </citation>
    <scope>PROTEIN SEQUENCE</scope>
    <scope>SUBCELLULAR LOCATION</scope>
    <scope>TISSUE SPECIFICITY</scope>
    <scope>MASS SPECTROMETRY</scope>
    <source>
        <tissue evidence="1">Venom</tissue>
    </source>
</reference>
<accession>P86114</accession>
<protein>
    <recommendedName>
        <fullName>Venom peptide Ocy8</fullName>
    </recommendedName>
</protein>
<organism>
    <name type="scientific">Opisthacanthus cayaporum</name>
    <name type="common">South American scorpion</name>
    <dbReference type="NCBI Taxonomy" id="573324"/>
    <lineage>
        <taxon>Eukaryota</taxon>
        <taxon>Metazoa</taxon>
        <taxon>Ecdysozoa</taxon>
        <taxon>Arthropoda</taxon>
        <taxon>Chelicerata</taxon>
        <taxon>Arachnida</taxon>
        <taxon>Scorpiones</taxon>
        <taxon>Iurida</taxon>
        <taxon>Scorpionoidea</taxon>
        <taxon>Hemiscorpiidae</taxon>
        <taxon>Opisthacanthus</taxon>
    </lineage>
</organism>
<evidence type="ECO:0000269" key="1">
    <source>
    </source>
</evidence>
<evidence type="ECO:0000303" key="2">
    <source>
    </source>
</evidence>
<evidence type="ECO:0000305" key="3"/>
<sequence>GSLGEKYAQKAAEVLTSIIP</sequence>
<dbReference type="GO" id="GO:0005576">
    <property type="term" value="C:extracellular region"/>
    <property type="evidence" value="ECO:0007669"/>
    <property type="project" value="UniProtKB-SubCell"/>
</dbReference>